<accession>Q4RGM4</accession>
<comment type="subunit">
    <text evidence="1">Component of the mitochondrial ribosome large subunit (39S) which comprises a 16S rRNA and about 50 distinct proteins.</text>
</comment>
<comment type="subcellular location">
    <subcellularLocation>
        <location evidence="1">Mitochondrion</location>
    </subcellularLocation>
</comment>
<comment type="similarity">
    <text evidence="3">Belongs to the bacterial ribosomal protein bL33 family.</text>
</comment>
<name>RM33_TETNG</name>
<proteinExistence type="inferred from homology"/>
<organism>
    <name type="scientific">Tetraodon nigroviridis</name>
    <name type="common">Spotted green pufferfish</name>
    <name type="synonym">Chelonodon nigroviridis</name>
    <dbReference type="NCBI Taxonomy" id="99883"/>
    <lineage>
        <taxon>Eukaryota</taxon>
        <taxon>Metazoa</taxon>
        <taxon>Chordata</taxon>
        <taxon>Craniata</taxon>
        <taxon>Vertebrata</taxon>
        <taxon>Euteleostomi</taxon>
        <taxon>Actinopterygii</taxon>
        <taxon>Neopterygii</taxon>
        <taxon>Teleostei</taxon>
        <taxon>Neoteleostei</taxon>
        <taxon>Acanthomorphata</taxon>
        <taxon>Eupercaria</taxon>
        <taxon>Tetraodontiformes</taxon>
        <taxon>Tetradontoidea</taxon>
        <taxon>Tetraodontidae</taxon>
        <taxon>Tetraodon</taxon>
    </lineage>
</organism>
<gene>
    <name type="primary">mrpl33</name>
    <name type="ORF">GSTENG00034743001</name>
</gene>
<protein>
    <recommendedName>
        <fullName evidence="3">Large ribosomal subunit protein bL33m</fullName>
    </recommendedName>
    <alternativeName>
        <fullName>39S ribosomal protein L33, mitochondrial</fullName>
        <shortName>L33mt</shortName>
        <shortName>MRP-L33</shortName>
    </alternativeName>
</protein>
<dbReference type="EMBL" id="CAAE01015095">
    <property type="protein sequence ID" value="CAG12458.1"/>
    <property type="molecule type" value="Genomic_DNA"/>
</dbReference>
<dbReference type="SMR" id="Q4RGM4"/>
<dbReference type="FunCoup" id="Q4RGM4">
    <property type="interactions" value="648"/>
</dbReference>
<dbReference type="STRING" id="99883.ENSTNIP00000021952"/>
<dbReference type="Ensembl" id="ENSTNIT00000022188.1">
    <property type="protein sequence ID" value="ENSTNIP00000021952.1"/>
    <property type="gene ID" value="ENSTNIG00000018771.1"/>
</dbReference>
<dbReference type="KEGG" id="tng:GSTEN00034743G001"/>
<dbReference type="GeneTree" id="ENSGT00390000010130"/>
<dbReference type="HOGENOM" id="CLU_190949_1_2_1"/>
<dbReference type="InParanoid" id="Q4RGM4"/>
<dbReference type="OMA" id="TCFNVKR"/>
<dbReference type="OrthoDB" id="275534at2759"/>
<dbReference type="TreeFam" id="TF300279"/>
<dbReference type="Proteomes" id="UP000007303">
    <property type="component" value="Unassembled WGS sequence"/>
</dbReference>
<dbReference type="GO" id="GO:0005762">
    <property type="term" value="C:mitochondrial large ribosomal subunit"/>
    <property type="evidence" value="ECO:0000250"/>
    <property type="project" value="UniProtKB"/>
</dbReference>
<dbReference type="GO" id="GO:0003735">
    <property type="term" value="F:structural constituent of ribosome"/>
    <property type="evidence" value="ECO:0007669"/>
    <property type="project" value="InterPro"/>
</dbReference>
<dbReference type="GO" id="GO:0006412">
    <property type="term" value="P:translation"/>
    <property type="evidence" value="ECO:0007669"/>
    <property type="project" value="InterPro"/>
</dbReference>
<dbReference type="FunFam" id="2.20.28.120:FF:000005">
    <property type="entry name" value="39S ribosomal protein L33, mitochondrial"/>
    <property type="match status" value="1"/>
</dbReference>
<dbReference type="Gene3D" id="2.20.28.120">
    <property type="entry name" value="Ribosomal protein L33"/>
    <property type="match status" value="1"/>
</dbReference>
<dbReference type="InterPro" id="IPR052008">
    <property type="entry name" value="Mitoribosomal_protein_bL33"/>
</dbReference>
<dbReference type="InterPro" id="IPR001705">
    <property type="entry name" value="Ribosomal_bL33"/>
</dbReference>
<dbReference type="InterPro" id="IPR038584">
    <property type="entry name" value="Ribosomal_bL33_sf"/>
</dbReference>
<dbReference type="InterPro" id="IPR011332">
    <property type="entry name" value="Ribosomal_zn-bd"/>
</dbReference>
<dbReference type="NCBIfam" id="TIGR01023">
    <property type="entry name" value="rpmG_bact"/>
    <property type="match status" value="1"/>
</dbReference>
<dbReference type="PANTHER" id="PTHR47037">
    <property type="entry name" value="39S RIBOSOMAL PROTEIN L33, MITOCHONDRIAL"/>
    <property type="match status" value="1"/>
</dbReference>
<dbReference type="PANTHER" id="PTHR47037:SF1">
    <property type="entry name" value="LARGE RIBOSOMAL SUBUNIT PROTEIN BL33M"/>
    <property type="match status" value="1"/>
</dbReference>
<dbReference type="Pfam" id="PF00471">
    <property type="entry name" value="Ribosomal_L33"/>
    <property type="match status" value="1"/>
</dbReference>
<dbReference type="SUPFAM" id="SSF57829">
    <property type="entry name" value="Zn-binding ribosomal proteins"/>
    <property type="match status" value="1"/>
</dbReference>
<keyword id="KW-0496">Mitochondrion</keyword>
<keyword id="KW-1185">Reference proteome</keyword>
<keyword id="KW-0687">Ribonucleoprotein</keyword>
<keyword id="KW-0689">Ribosomal protein</keyword>
<keyword id="KW-0809">Transit peptide</keyword>
<reference key="1">
    <citation type="journal article" date="2004" name="Nature">
        <title>Genome duplication in the teleost fish Tetraodon nigroviridis reveals the early vertebrate proto-karyotype.</title>
        <authorList>
            <person name="Jaillon O."/>
            <person name="Aury J.-M."/>
            <person name="Brunet F."/>
            <person name="Petit J.-L."/>
            <person name="Stange-Thomann N."/>
            <person name="Mauceli E."/>
            <person name="Bouneau L."/>
            <person name="Fischer C."/>
            <person name="Ozouf-Costaz C."/>
            <person name="Bernot A."/>
            <person name="Nicaud S."/>
            <person name="Jaffe D."/>
            <person name="Fisher S."/>
            <person name="Lutfalla G."/>
            <person name="Dossat C."/>
            <person name="Segurens B."/>
            <person name="Dasilva C."/>
            <person name="Salanoubat M."/>
            <person name="Levy M."/>
            <person name="Boudet N."/>
            <person name="Castellano S."/>
            <person name="Anthouard V."/>
            <person name="Jubin C."/>
            <person name="Castelli V."/>
            <person name="Katinka M."/>
            <person name="Vacherie B."/>
            <person name="Biemont C."/>
            <person name="Skalli Z."/>
            <person name="Cattolico L."/>
            <person name="Poulain J."/>
            <person name="De Berardinis V."/>
            <person name="Cruaud C."/>
            <person name="Duprat S."/>
            <person name="Brottier P."/>
            <person name="Coutanceau J.-P."/>
            <person name="Gouzy J."/>
            <person name="Parra G."/>
            <person name="Lardier G."/>
            <person name="Chapple C."/>
            <person name="McKernan K.J."/>
            <person name="McEwan P."/>
            <person name="Bosak S."/>
            <person name="Kellis M."/>
            <person name="Volff J.-N."/>
            <person name="Guigo R."/>
            <person name="Zody M.C."/>
            <person name="Mesirov J."/>
            <person name="Lindblad-Toh K."/>
            <person name="Birren B."/>
            <person name="Nusbaum C."/>
            <person name="Kahn D."/>
            <person name="Robinson-Rechavi M."/>
            <person name="Laudet V."/>
            <person name="Schachter V."/>
            <person name="Quetier F."/>
            <person name="Saurin W."/>
            <person name="Scarpelli C."/>
            <person name="Wincker P."/>
            <person name="Lander E.S."/>
            <person name="Weissenbach J."/>
            <person name="Roest Crollius H."/>
        </authorList>
    </citation>
    <scope>NUCLEOTIDE SEQUENCE [LARGE SCALE GENOMIC DNA]</scope>
</reference>
<evidence type="ECO:0000250" key="1">
    <source>
        <dbReference type="UniProtKB" id="O75394"/>
    </source>
</evidence>
<evidence type="ECO:0000250" key="2">
    <source>
        <dbReference type="UniProtKB" id="Q3SZ47"/>
    </source>
</evidence>
<evidence type="ECO:0000305" key="3"/>
<sequence length="65" mass="7520">MFLTTANLAKAKSKTILVQMVSAAGTGYFFNTKRNRLRDKLVLRKHDPVVNKHVLFFEKKKIRSI</sequence>
<feature type="transit peptide" description="Mitochondrion" evidence="2">
    <location>
        <begin position="1"/>
        <end position="8"/>
    </location>
</feature>
<feature type="chain" id="PRO_0000238627" description="Large ribosomal subunit protein bL33m">
    <location>
        <begin position="9"/>
        <end position="65"/>
    </location>
</feature>